<proteinExistence type="inferred from homology"/>
<sequence>MAMTAEVKDELSRLVVTHVSCRKAEVSSLLRFAGGLHIVGGRVVVEAEVDLGSTARRLRREIFDLFTYSADVHVLSAGGLRKSSRYIVRVAKEGEALARQTGLLDLRGRPVRGLPAQVVGGSVADAEAAWRGAFLAHGSLTEPGRSSALEVSCPGPEAALALVGAARRLGISAKAREVRGTDRVVIRDGEAIGALLTRMGAQDTRLVWEERRMRREVRATANRLANFDDANLRRSARAAVAAAARVERALDILGDEVPDHLAAAGHLRVEHRQASLEELGQLADPPMTKDAVAGRIRRLLSMADRKAKETGIPDTESAVTADLLDDA</sequence>
<keyword id="KW-0131">Cell cycle</keyword>
<keyword id="KW-0132">Cell division</keyword>
<keyword id="KW-0238">DNA-binding</keyword>
<protein>
    <recommendedName>
        <fullName evidence="2">Probable cell division protein WhiA</fullName>
    </recommendedName>
</protein>
<dbReference type="EMBL" id="CP000431">
    <property type="protein sequence ID" value="ABG98940.1"/>
    <property type="status" value="ALT_INIT"/>
    <property type="molecule type" value="Genomic_DNA"/>
</dbReference>
<dbReference type="RefSeq" id="WP_005262275.1">
    <property type="nucleotide sequence ID" value="NC_008268.1"/>
</dbReference>
<dbReference type="SMR" id="Q0S0J6"/>
<dbReference type="GeneID" id="69891589"/>
<dbReference type="KEGG" id="rha:RHA1_ro07176"/>
<dbReference type="eggNOG" id="COG1481">
    <property type="taxonomic scope" value="Bacteria"/>
</dbReference>
<dbReference type="HOGENOM" id="CLU_053282_0_0_11"/>
<dbReference type="OrthoDB" id="5197218at2"/>
<dbReference type="Proteomes" id="UP000008710">
    <property type="component" value="Chromosome"/>
</dbReference>
<dbReference type="GO" id="GO:0003677">
    <property type="term" value="F:DNA binding"/>
    <property type="evidence" value="ECO:0007669"/>
    <property type="project" value="UniProtKB-UniRule"/>
</dbReference>
<dbReference type="GO" id="GO:0051301">
    <property type="term" value="P:cell division"/>
    <property type="evidence" value="ECO:0007669"/>
    <property type="project" value="UniProtKB-UniRule"/>
</dbReference>
<dbReference type="GO" id="GO:0043937">
    <property type="term" value="P:regulation of sporulation"/>
    <property type="evidence" value="ECO:0007669"/>
    <property type="project" value="InterPro"/>
</dbReference>
<dbReference type="FunFam" id="3.10.28.10:FF:000001">
    <property type="entry name" value="Probable cell division protein WhiA"/>
    <property type="match status" value="1"/>
</dbReference>
<dbReference type="Gene3D" id="3.10.28.10">
    <property type="entry name" value="Homing endonucleases"/>
    <property type="match status" value="1"/>
</dbReference>
<dbReference type="HAMAP" id="MF_01420">
    <property type="entry name" value="HTH_type_WhiA"/>
    <property type="match status" value="1"/>
</dbReference>
<dbReference type="InterPro" id="IPR027434">
    <property type="entry name" value="Homing_endonucl"/>
</dbReference>
<dbReference type="InterPro" id="IPR018478">
    <property type="entry name" value="Sporu_reg_WhiA_N_dom"/>
</dbReference>
<dbReference type="InterPro" id="IPR003802">
    <property type="entry name" value="Sporulation_regulator_WhiA"/>
</dbReference>
<dbReference type="InterPro" id="IPR023054">
    <property type="entry name" value="Sporulation_regulator_WhiA_C"/>
</dbReference>
<dbReference type="InterPro" id="IPR039518">
    <property type="entry name" value="WhiA_LAGLIDADG_dom"/>
</dbReference>
<dbReference type="NCBIfam" id="TIGR00647">
    <property type="entry name" value="DNA_bind_WhiA"/>
    <property type="match status" value="1"/>
</dbReference>
<dbReference type="PANTHER" id="PTHR37307">
    <property type="entry name" value="CELL DIVISION PROTEIN WHIA-RELATED"/>
    <property type="match status" value="1"/>
</dbReference>
<dbReference type="PANTHER" id="PTHR37307:SF1">
    <property type="entry name" value="CELL DIVISION PROTEIN WHIA-RELATED"/>
    <property type="match status" value="1"/>
</dbReference>
<dbReference type="Pfam" id="PF02650">
    <property type="entry name" value="HTH_WhiA"/>
    <property type="match status" value="1"/>
</dbReference>
<dbReference type="Pfam" id="PF14527">
    <property type="entry name" value="LAGLIDADG_WhiA"/>
    <property type="match status" value="1"/>
</dbReference>
<dbReference type="Pfam" id="PF10298">
    <property type="entry name" value="WhiA_N"/>
    <property type="match status" value="1"/>
</dbReference>
<accession>Q0S0J6</accession>
<evidence type="ECO:0000250" key="1">
    <source>
        <dbReference type="UniProtKB" id="P9WF45"/>
    </source>
</evidence>
<evidence type="ECO:0000255" key="2">
    <source>
        <dbReference type="HAMAP-Rule" id="MF_01420"/>
    </source>
</evidence>
<evidence type="ECO:0000256" key="3">
    <source>
        <dbReference type="SAM" id="MobiDB-lite"/>
    </source>
</evidence>
<comment type="function">
    <text evidence="2">Involved in cell division and chromosome segregation.</text>
</comment>
<comment type="similarity">
    <text evidence="2">Belongs to the WhiA family.</text>
</comment>
<comment type="sequence caution" evidence="1">
    <conflict type="erroneous initiation">
        <sequence resource="EMBL-CDS" id="ABG98940"/>
    </conflict>
    <text>Truncated N-terminus.</text>
</comment>
<feature type="chain" id="PRO_0000376547" description="Probable cell division protein WhiA">
    <location>
        <begin position="1"/>
        <end position="327"/>
    </location>
</feature>
<feature type="DNA-binding region" description="H-T-H motif" evidence="2">
    <location>
        <begin position="275"/>
        <end position="308"/>
    </location>
</feature>
<feature type="region of interest" description="Disordered" evidence="3">
    <location>
        <begin position="306"/>
        <end position="327"/>
    </location>
</feature>
<name>WHIA_RHOJR</name>
<reference key="1">
    <citation type="journal article" date="2006" name="Proc. Natl. Acad. Sci. U.S.A.">
        <title>The complete genome of Rhodococcus sp. RHA1 provides insights into a catabolic powerhouse.</title>
        <authorList>
            <person name="McLeod M.P."/>
            <person name="Warren R.L."/>
            <person name="Hsiao W.W.L."/>
            <person name="Araki N."/>
            <person name="Myhre M."/>
            <person name="Fernandes C."/>
            <person name="Miyazawa D."/>
            <person name="Wong W."/>
            <person name="Lillquist A.L."/>
            <person name="Wang D."/>
            <person name="Dosanjh M."/>
            <person name="Hara H."/>
            <person name="Petrescu A."/>
            <person name="Morin R.D."/>
            <person name="Yang G."/>
            <person name="Stott J.M."/>
            <person name="Schein J.E."/>
            <person name="Shin H."/>
            <person name="Smailus D."/>
            <person name="Siddiqui A.S."/>
            <person name="Marra M.A."/>
            <person name="Jones S.J.M."/>
            <person name="Holt R."/>
            <person name="Brinkman F.S.L."/>
            <person name="Miyauchi K."/>
            <person name="Fukuda M."/>
            <person name="Davies J.E."/>
            <person name="Mohn W.W."/>
            <person name="Eltis L.D."/>
        </authorList>
    </citation>
    <scope>NUCLEOTIDE SEQUENCE [LARGE SCALE GENOMIC DNA]</scope>
    <source>
        <strain>RHA1</strain>
    </source>
</reference>
<gene>
    <name evidence="2" type="primary">whiA</name>
    <name type="ordered locus">RHA1_ro07176</name>
</gene>
<organism>
    <name type="scientific">Rhodococcus jostii (strain RHA1)</name>
    <dbReference type="NCBI Taxonomy" id="101510"/>
    <lineage>
        <taxon>Bacteria</taxon>
        <taxon>Bacillati</taxon>
        <taxon>Actinomycetota</taxon>
        <taxon>Actinomycetes</taxon>
        <taxon>Mycobacteriales</taxon>
        <taxon>Nocardiaceae</taxon>
        <taxon>Rhodococcus</taxon>
    </lineage>
</organism>